<proteinExistence type="inferred from homology"/>
<organism>
    <name type="scientific">Ruegeria sp. (strain TM1040)</name>
    <name type="common">Silicibacter sp.</name>
    <dbReference type="NCBI Taxonomy" id="292414"/>
    <lineage>
        <taxon>Bacteria</taxon>
        <taxon>Pseudomonadati</taxon>
        <taxon>Pseudomonadota</taxon>
        <taxon>Alphaproteobacteria</taxon>
        <taxon>Rhodobacterales</taxon>
        <taxon>Roseobacteraceae</taxon>
        <taxon>Ruegeria</taxon>
    </lineage>
</organism>
<gene>
    <name evidence="1" type="primary">hisS</name>
    <name type="ordered locus">TM1040_0503</name>
</gene>
<feature type="chain" id="PRO_1000016456" description="Histidine--tRNA ligase">
    <location>
        <begin position="1"/>
        <end position="500"/>
    </location>
</feature>
<evidence type="ECO:0000255" key="1">
    <source>
        <dbReference type="HAMAP-Rule" id="MF_00127"/>
    </source>
</evidence>
<reference key="1">
    <citation type="submission" date="2006-05" db="EMBL/GenBank/DDBJ databases">
        <title>Complete sequence of chromosome of Silicibacter sp. TM1040.</title>
        <authorList>
            <consortium name="US DOE Joint Genome Institute"/>
            <person name="Copeland A."/>
            <person name="Lucas S."/>
            <person name="Lapidus A."/>
            <person name="Barry K."/>
            <person name="Detter J.C."/>
            <person name="Glavina del Rio T."/>
            <person name="Hammon N."/>
            <person name="Israni S."/>
            <person name="Dalin E."/>
            <person name="Tice H."/>
            <person name="Pitluck S."/>
            <person name="Brettin T."/>
            <person name="Bruce D."/>
            <person name="Han C."/>
            <person name="Tapia R."/>
            <person name="Goodwin L."/>
            <person name="Thompson L.S."/>
            <person name="Gilna P."/>
            <person name="Schmutz J."/>
            <person name="Larimer F."/>
            <person name="Land M."/>
            <person name="Hauser L."/>
            <person name="Kyrpides N."/>
            <person name="Kim E."/>
            <person name="Belas R."/>
            <person name="Moran M.A."/>
            <person name="Buchan A."/>
            <person name="Gonzalez J.M."/>
            <person name="Schell M.A."/>
            <person name="Sun F."/>
            <person name="Richardson P."/>
        </authorList>
    </citation>
    <scope>NUCLEOTIDE SEQUENCE [LARGE SCALE GENOMIC DNA]</scope>
    <source>
        <strain>TM1040</strain>
    </source>
</reference>
<sequence>MAKAKKQPRPKAITPKGFRDYFGEEVTQRTHMLATIAEVYHHYGFEALESSAVETVEALGKFLPDVDRPNEGVFAWQEAEDDGKGDWMALRYDLTAPLARVYAQHRNDLPSPYRRYAMGPVWRNEKPGPGRFRQFYQCDADTVGTASMAADAEICMMLSDTLEKVGIPRGDYLVRVNNRKVLNGVLEAMGLLEDDPKRDDVLRTIDKFDKVGESGVRELLGKGRLDASGAYIDGVGLEDHQAEPVLAFLTSKGDTVTETMTNLRAAVGDSKVGQEGIAELELMGSLFAAAGYGEDRILIDPSIVRGLGYYTGPVFEAELTFEIFDEKGRKRQFGSVAGGGRYDGLVKRFTGQEVPAVGLSIGVDRLLAALREKGRLAATPTGPVVVTVMDRDRMADYQAMVAELRQAGIRAEVYLGNPKNFGNQLKYADKRHSPIAVIEGGDEKDRGVVQIKDLILGAKIAESATLEEWKERPSQFEVPRTELVAKVREILVSQSSDREG</sequence>
<comment type="catalytic activity">
    <reaction evidence="1">
        <text>tRNA(His) + L-histidine + ATP = L-histidyl-tRNA(His) + AMP + diphosphate + H(+)</text>
        <dbReference type="Rhea" id="RHEA:17313"/>
        <dbReference type="Rhea" id="RHEA-COMP:9665"/>
        <dbReference type="Rhea" id="RHEA-COMP:9689"/>
        <dbReference type="ChEBI" id="CHEBI:15378"/>
        <dbReference type="ChEBI" id="CHEBI:30616"/>
        <dbReference type="ChEBI" id="CHEBI:33019"/>
        <dbReference type="ChEBI" id="CHEBI:57595"/>
        <dbReference type="ChEBI" id="CHEBI:78442"/>
        <dbReference type="ChEBI" id="CHEBI:78527"/>
        <dbReference type="ChEBI" id="CHEBI:456215"/>
        <dbReference type="EC" id="6.1.1.21"/>
    </reaction>
</comment>
<comment type="subunit">
    <text evidence="1">Homodimer.</text>
</comment>
<comment type="subcellular location">
    <subcellularLocation>
        <location evidence="1">Cytoplasm</location>
    </subcellularLocation>
</comment>
<comment type="similarity">
    <text evidence="1">Belongs to the class-II aminoacyl-tRNA synthetase family.</text>
</comment>
<protein>
    <recommendedName>
        <fullName evidence="1">Histidine--tRNA ligase</fullName>
        <ecNumber evidence="1">6.1.1.21</ecNumber>
    </recommendedName>
    <alternativeName>
        <fullName evidence="1">Histidyl-tRNA synthetase</fullName>
        <shortName evidence="1">HisRS</shortName>
    </alternativeName>
</protein>
<accession>Q1GJD0</accession>
<keyword id="KW-0030">Aminoacyl-tRNA synthetase</keyword>
<keyword id="KW-0067">ATP-binding</keyword>
<keyword id="KW-0963">Cytoplasm</keyword>
<keyword id="KW-0436">Ligase</keyword>
<keyword id="KW-0547">Nucleotide-binding</keyword>
<keyword id="KW-0648">Protein biosynthesis</keyword>
<keyword id="KW-1185">Reference proteome</keyword>
<name>SYH_RUEST</name>
<dbReference type="EC" id="6.1.1.21" evidence="1"/>
<dbReference type="EMBL" id="CP000377">
    <property type="protein sequence ID" value="ABF63236.1"/>
    <property type="molecule type" value="Genomic_DNA"/>
</dbReference>
<dbReference type="RefSeq" id="WP_011537851.1">
    <property type="nucleotide sequence ID" value="NC_008044.1"/>
</dbReference>
<dbReference type="SMR" id="Q1GJD0"/>
<dbReference type="STRING" id="292414.TM1040_0503"/>
<dbReference type="KEGG" id="sit:TM1040_0503"/>
<dbReference type="eggNOG" id="COG0124">
    <property type="taxonomic scope" value="Bacteria"/>
</dbReference>
<dbReference type="HOGENOM" id="CLU_025113_3_2_5"/>
<dbReference type="OrthoDB" id="9800814at2"/>
<dbReference type="Proteomes" id="UP000000636">
    <property type="component" value="Chromosome"/>
</dbReference>
<dbReference type="GO" id="GO:0005737">
    <property type="term" value="C:cytoplasm"/>
    <property type="evidence" value="ECO:0007669"/>
    <property type="project" value="UniProtKB-SubCell"/>
</dbReference>
<dbReference type="GO" id="GO:0005524">
    <property type="term" value="F:ATP binding"/>
    <property type="evidence" value="ECO:0007669"/>
    <property type="project" value="UniProtKB-UniRule"/>
</dbReference>
<dbReference type="GO" id="GO:0004821">
    <property type="term" value="F:histidine-tRNA ligase activity"/>
    <property type="evidence" value="ECO:0007669"/>
    <property type="project" value="UniProtKB-UniRule"/>
</dbReference>
<dbReference type="GO" id="GO:0006427">
    <property type="term" value="P:histidyl-tRNA aminoacylation"/>
    <property type="evidence" value="ECO:0007669"/>
    <property type="project" value="UniProtKB-UniRule"/>
</dbReference>
<dbReference type="CDD" id="cd00773">
    <property type="entry name" value="HisRS-like_core"/>
    <property type="match status" value="1"/>
</dbReference>
<dbReference type="CDD" id="cd00859">
    <property type="entry name" value="HisRS_anticodon"/>
    <property type="match status" value="1"/>
</dbReference>
<dbReference type="Gene3D" id="3.40.50.800">
    <property type="entry name" value="Anticodon-binding domain"/>
    <property type="match status" value="1"/>
</dbReference>
<dbReference type="Gene3D" id="3.30.930.10">
    <property type="entry name" value="Bira Bifunctional Protein, Domain 2"/>
    <property type="match status" value="1"/>
</dbReference>
<dbReference type="HAMAP" id="MF_00127">
    <property type="entry name" value="His_tRNA_synth"/>
    <property type="match status" value="1"/>
</dbReference>
<dbReference type="InterPro" id="IPR006195">
    <property type="entry name" value="aa-tRNA-synth_II"/>
</dbReference>
<dbReference type="InterPro" id="IPR045864">
    <property type="entry name" value="aa-tRNA-synth_II/BPL/LPL"/>
</dbReference>
<dbReference type="InterPro" id="IPR004154">
    <property type="entry name" value="Anticodon-bd"/>
</dbReference>
<dbReference type="InterPro" id="IPR036621">
    <property type="entry name" value="Anticodon-bd_dom_sf"/>
</dbReference>
<dbReference type="InterPro" id="IPR015807">
    <property type="entry name" value="His-tRNA-ligase"/>
</dbReference>
<dbReference type="InterPro" id="IPR041715">
    <property type="entry name" value="HisRS-like_core"/>
</dbReference>
<dbReference type="InterPro" id="IPR004516">
    <property type="entry name" value="HisRS/HisZ"/>
</dbReference>
<dbReference type="InterPro" id="IPR033656">
    <property type="entry name" value="HisRS_anticodon"/>
</dbReference>
<dbReference type="NCBIfam" id="TIGR00442">
    <property type="entry name" value="hisS"/>
    <property type="match status" value="1"/>
</dbReference>
<dbReference type="PANTHER" id="PTHR11476:SF7">
    <property type="entry name" value="HISTIDINE--TRNA LIGASE"/>
    <property type="match status" value="1"/>
</dbReference>
<dbReference type="PANTHER" id="PTHR11476">
    <property type="entry name" value="HISTIDYL-TRNA SYNTHETASE"/>
    <property type="match status" value="1"/>
</dbReference>
<dbReference type="Pfam" id="PF03129">
    <property type="entry name" value="HGTP_anticodon"/>
    <property type="match status" value="1"/>
</dbReference>
<dbReference type="Pfam" id="PF13393">
    <property type="entry name" value="tRNA-synt_His"/>
    <property type="match status" value="1"/>
</dbReference>
<dbReference type="PIRSF" id="PIRSF001549">
    <property type="entry name" value="His-tRNA_synth"/>
    <property type="match status" value="1"/>
</dbReference>
<dbReference type="SUPFAM" id="SSF52954">
    <property type="entry name" value="Class II aaRS ABD-related"/>
    <property type="match status" value="1"/>
</dbReference>
<dbReference type="SUPFAM" id="SSF55681">
    <property type="entry name" value="Class II aaRS and biotin synthetases"/>
    <property type="match status" value="1"/>
</dbReference>
<dbReference type="PROSITE" id="PS50862">
    <property type="entry name" value="AA_TRNA_LIGASE_II"/>
    <property type="match status" value="1"/>
</dbReference>